<dbReference type="EMBL" id="AE014133">
    <property type="protein sequence ID" value="AAN59665.1"/>
    <property type="molecule type" value="Genomic_DNA"/>
</dbReference>
<dbReference type="RefSeq" id="NP_722359.1">
    <property type="nucleotide sequence ID" value="NC_004350.2"/>
</dbReference>
<dbReference type="RefSeq" id="WP_002262376.1">
    <property type="nucleotide sequence ID" value="NC_004350.2"/>
</dbReference>
<dbReference type="SMR" id="Q8DRY7"/>
<dbReference type="STRING" id="210007.SMU_2069"/>
<dbReference type="KEGG" id="smu:SMU_2069"/>
<dbReference type="PATRIC" id="fig|210007.7.peg.1841"/>
<dbReference type="eggNOG" id="COG0428">
    <property type="taxonomic scope" value="Bacteria"/>
</dbReference>
<dbReference type="HOGENOM" id="CLU_015114_1_3_9"/>
<dbReference type="OrthoDB" id="9787346at2"/>
<dbReference type="PhylomeDB" id="Q8DRY7"/>
<dbReference type="Proteomes" id="UP000002512">
    <property type="component" value="Chromosome"/>
</dbReference>
<dbReference type="GO" id="GO:0005886">
    <property type="term" value="C:plasma membrane"/>
    <property type="evidence" value="ECO:0007669"/>
    <property type="project" value="UniProtKB-SubCell"/>
</dbReference>
<dbReference type="GO" id="GO:0046872">
    <property type="term" value="F:metal ion binding"/>
    <property type="evidence" value="ECO:0007669"/>
    <property type="project" value="UniProtKB-KW"/>
</dbReference>
<dbReference type="GO" id="GO:0005385">
    <property type="term" value="F:zinc ion transmembrane transporter activity"/>
    <property type="evidence" value="ECO:0007669"/>
    <property type="project" value="UniProtKB-UniRule"/>
</dbReference>
<dbReference type="HAMAP" id="MF_00548">
    <property type="entry name" value="ZupT"/>
    <property type="match status" value="1"/>
</dbReference>
<dbReference type="InterPro" id="IPR003689">
    <property type="entry name" value="ZIP"/>
</dbReference>
<dbReference type="InterPro" id="IPR023498">
    <property type="entry name" value="Zn_transptr_ZupT"/>
</dbReference>
<dbReference type="NCBIfam" id="NF003243">
    <property type="entry name" value="PRK04201.1"/>
    <property type="match status" value="1"/>
</dbReference>
<dbReference type="PANTHER" id="PTHR11040:SF205">
    <property type="entry name" value="ZINC TRANSPORTER ZUPT"/>
    <property type="match status" value="1"/>
</dbReference>
<dbReference type="PANTHER" id="PTHR11040">
    <property type="entry name" value="ZINC/IRON TRANSPORTER"/>
    <property type="match status" value="1"/>
</dbReference>
<dbReference type="Pfam" id="PF02535">
    <property type="entry name" value="Zip"/>
    <property type="match status" value="1"/>
</dbReference>
<evidence type="ECO:0000255" key="1">
    <source>
        <dbReference type="HAMAP-Rule" id="MF_00548"/>
    </source>
</evidence>
<keyword id="KW-1003">Cell membrane</keyword>
<keyword id="KW-0406">Ion transport</keyword>
<keyword id="KW-0408">Iron</keyword>
<keyword id="KW-0472">Membrane</keyword>
<keyword id="KW-0479">Metal-binding</keyword>
<keyword id="KW-1185">Reference proteome</keyword>
<keyword id="KW-0812">Transmembrane</keyword>
<keyword id="KW-1133">Transmembrane helix</keyword>
<keyword id="KW-0813">Transport</keyword>
<keyword id="KW-0862">Zinc</keyword>
<keyword id="KW-0864">Zinc transport</keyword>
<comment type="function">
    <text evidence="1">Mediates zinc uptake. May also transport other divalent cations.</text>
</comment>
<comment type="catalytic activity">
    <reaction evidence="1">
        <text>Zn(2+)(in) = Zn(2+)(out)</text>
        <dbReference type="Rhea" id="RHEA:29351"/>
        <dbReference type="ChEBI" id="CHEBI:29105"/>
    </reaction>
</comment>
<comment type="subcellular location">
    <subcellularLocation>
        <location evidence="1">Cell membrane</location>
        <topology evidence="1">Multi-pass membrane protein</topology>
    </subcellularLocation>
</comment>
<comment type="similarity">
    <text evidence="1">Belongs to the ZIP transporter (TC 2.A.5) family. ZupT subfamily.</text>
</comment>
<accession>Q8DRY7</accession>
<proteinExistence type="inferred from homology"/>
<reference key="1">
    <citation type="journal article" date="2002" name="Proc. Natl. Acad. Sci. U.S.A.">
        <title>Genome sequence of Streptococcus mutans UA159, a cariogenic dental pathogen.</title>
        <authorList>
            <person name="Ajdic D.J."/>
            <person name="McShan W.M."/>
            <person name="McLaughlin R.E."/>
            <person name="Savic G."/>
            <person name="Chang J."/>
            <person name="Carson M.B."/>
            <person name="Primeaux C."/>
            <person name="Tian R."/>
            <person name="Kenton S."/>
            <person name="Jia H.G."/>
            <person name="Lin S.P."/>
            <person name="Qian Y."/>
            <person name="Li S."/>
            <person name="Zhu H."/>
            <person name="Najar F.Z."/>
            <person name="Lai H."/>
            <person name="White J."/>
            <person name="Roe B.A."/>
            <person name="Ferretti J.J."/>
        </authorList>
    </citation>
    <scope>NUCLEOTIDE SEQUENCE [LARGE SCALE GENOMIC DNA]</scope>
    <source>
        <strain>ATCC 700610 / UA159</strain>
    </source>
</reference>
<protein>
    <recommendedName>
        <fullName evidence="1">Zinc transporter ZupT</fullName>
    </recommendedName>
</protein>
<feature type="chain" id="PRO_0000207280" description="Zinc transporter ZupT">
    <location>
        <begin position="1"/>
        <end position="264"/>
    </location>
</feature>
<feature type="transmembrane region" description="Helical" evidence="1">
    <location>
        <begin position="8"/>
        <end position="28"/>
    </location>
</feature>
<feature type="transmembrane region" description="Helical" evidence="1">
    <location>
        <begin position="36"/>
        <end position="56"/>
    </location>
</feature>
<feature type="transmembrane region" description="Helical" evidence="1">
    <location>
        <begin position="75"/>
        <end position="95"/>
    </location>
</feature>
<feature type="transmembrane region" description="Helical" evidence="1">
    <location>
        <begin position="121"/>
        <end position="141"/>
    </location>
</feature>
<feature type="transmembrane region" description="Helical" evidence="1">
    <location>
        <begin position="148"/>
        <end position="168"/>
    </location>
</feature>
<feature type="transmembrane region" description="Helical" evidence="1">
    <location>
        <begin position="197"/>
        <end position="217"/>
    </location>
</feature>
<feature type="transmembrane region" description="Helical" evidence="1">
    <location>
        <begin position="219"/>
        <end position="239"/>
    </location>
</feature>
<feature type="transmembrane region" description="Helical" evidence="1">
    <location>
        <begin position="244"/>
        <end position="264"/>
    </location>
</feature>
<feature type="binding site" description="M2 metal binding site" evidence="1">
    <location>
        <position position="132"/>
    </location>
    <ligand>
        <name>Fe(2+)</name>
        <dbReference type="ChEBI" id="CHEBI:29033"/>
    </ligand>
</feature>
<feature type="binding site" description="M2 metal binding site" evidence="1">
    <location>
        <position position="135"/>
    </location>
    <ligand>
        <name>Fe(2+)</name>
        <dbReference type="ChEBI" id="CHEBI:29033"/>
    </ligand>
</feature>
<feature type="binding site" description="M1 metal binding site" evidence="1">
    <location>
        <position position="135"/>
    </location>
    <ligand>
        <name>Zn(2+)</name>
        <dbReference type="ChEBI" id="CHEBI:29105"/>
    </ligand>
</feature>
<feature type="binding site" description="M1 metal binding site" evidence="1">
    <location>
        <position position="160"/>
    </location>
    <ligand>
        <name>Zn(2+)</name>
        <dbReference type="ChEBI" id="CHEBI:29105"/>
    </ligand>
</feature>
<feature type="binding site" description="M2 metal binding site" evidence="1">
    <location>
        <position position="161"/>
    </location>
    <ligand>
        <name>Fe(2+)</name>
        <dbReference type="ChEBI" id="CHEBI:29033"/>
    </ligand>
</feature>
<feature type="binding site" description="M2 metal binding site" evidence="1">
    <location>
        <position position="164"/>
    </location>
    <ligand>
        <name>Fe(2+)</name>
        <dbReference type="ChEBI" id="CHEBI:29033"/>
    </ligand>
</feature>
<feature type="binding site" description="M1 metal binding site" evidence="1">
    <location>
        <position position="164"/>
    </location>
    <ligand>
        <name>Zn(2+)</name>
        <dbReference type="ChEBI" id="CHEBI:29105"/>
    </ligand>
</feature>
<feature type="binding site" description="M2 metal binding site" evidence="1">
    <location>
        <position position="193"/>
    </location>
    <ligand>
        <name>Fe(2+)</name>
        <dbReference type="ChEBI" id="CHEBI:29033"/>
    </ligand>
</feature>
<organism>
    <name type="scientific">Streptococcus mutans serotype c (strain ATCC 700610 / UA159)</name>
    <dbReference type="NCBI Taxonomy" id="210007"/>
    <lineage>
        <taxon>Bacteria</taxon>
        <taxon>Bacillati</taxon>
        <taxon>Bacillota</taxon>
        <taxon>Bacilli</taxon>
        <taxon>Lactobacillales</taxon>
        <taxon>Streptococcaceae</taxon>
        <taxon>Streptococcus</taxon>
    </lineage>
</organism>
<gene>
    <name evidence="1" type="primary">zupT</name>
    <name type="ordered locus">SMU_2069</name>
</gene>
<sequence length="264" mass="28317">MSQHLFTAFILTALAGLSTGIGSLIAFVTKHTNKTFLSVSLGFSAGVMIYVSMIEIFPTAQTILTKAMDKKSGSWLTVLAFFGGILLIAIIDKLIPSEENPHEIKTIEEEDQKPTKLMRMGLMTAIAIGIHNFPEGLATFISGLQDASIAIPIVIAIAIHNIPEGIAVSVPIYQATGSKKKAFTYSFLSGLAEPLGAIIGWFLLMPIMNNIVYGAIFSAVAGIMVFISLDELLPAAEEYGKHHLAIYGVISGMLIMAVSLLLFI</sequence>
<name>ZUPT_STRMU</name>